<organism>
    <name type="scientific">Listeria monocytogenes serotype 4a (strain HCC23)</name>
    <dbReference type="NCBI Taxonomy" id="552536"/>
    <lineage>
        <taxon>Bacteria</taxon>
        <taxon>Bacillati</taxon>
        <taxon>Bacillota</taxon>
        <taxon>Bacilli</taxon>
        <taxon>Bacillales</taxon>
        <taxon>Listeriaceae</taxon>
        <taxon>Listeria</taxon>
    </lineage>
</organism>
<sequence>MNQAELQRHMEEVSLQFFQKEFRHQAVFNARLRTTGGRYLLKSHNIEMNPKYLENFGLAYFIGIMKHELCHYHLHIEKKGYQHRDQDFRELLKKVDAPRFCATIPREITMHEYTCKSCGKSFLRQRRFNVNRYRCGSCGGKLIQIGSKKIYTENA</sequence>
<accession>B8DG60</accession>
<dbReference type="EMBL" id="CP001175">
    <property type="protein sequence ID" value="ACK40068.1"/>
    <property type="molecule type" value="Genomic_DNA"/>
</dbReference>
<dbReference type="RefSeq" id="WP_012581660.1">
    <property type="nucleotide sequence ID" value="NC_011660.1"/>
</dbReference>
<dbReference type="KEGG" id="lmh:LMHCC_1727"/>
<dbReference type="HOGENOM" id="CLU_123820_0_0_9"/>
<dbReference type="GO" id="GO:0005737">
    <property type="term" value="C:cytoplasm"/>
    <property type="evidence" value="ECO:0007669"/>
    <property type="project" value="UniProtKB-SubCell"/>
</dbReference>
<dbReference type="GO" id="GO:0008270">
    <property type="term" value="F:zinc ion binding"/>
    <property type="evidence" value="ECO:0007669"/>
    <property type="project" value="UniProtKB-UniRule"/>
</dbReference>
<dbReference type="GO" id="GO:0006950">
    <property type="term" value="P:response to stress"/>
    <property type="evidence" value="ECO:0007669"/>
    <property type="project" value="UniProtKB-ARBA"/>
</dbReference>
<dbReference type="HAMAP" id="MF_00745">
    <property type="entry name" value="SprT_like"/>
    <property type="match status" value="1"/>
</dbReference>
<dbReference type="InterPro" id="IPR006640">
    <property type="entry name" value="SprT-like_domain"/>
</dbReference>
<dbReference type="InterPro" id="IPR035240">
    <property type="entry name" value="SprT_Zn_ribbon"/>
</dbReference>
<dbReference type="InterPro" id="IPR023524">
    <property type="entry name" value="Uncharacterised_SprT-like"/>
</dbReference>
<dbReference type="NCBIfam" id="NF003339">
    <property type="entry name" value="PRK04351.1"/>
    <property type="match status" value="1"/>
</dbReference>
<dbReference type="Pfam" id="PF10263">
    <property type="entry name" value="SprT-like"/>
    <property type="match status" value="1"/>
</dbReference>
<dbReference type="Pfam" id="PF17283">
    <property type="entry name" value="Zn_ribbon_SprT"/>
    <property type="match status" value="1"/>
</dbReference>
<dbReference type="SMART" id="SM00731">
    <property type="entry name" value="SprT"/>
    <property type="match status" value="1"/>
</dbReference>
<feature type="chain" id="PRO_1000148322" description="Protein SprT-like">
    <location>
        <begin position="1"/>
        <end position="155"/>
    </location>
</feature>
<feature type="domain" description="SprT-like" evidence="1">
    <location>
        <begin position="7"/>
        <end position="145"/>
    </location>
</feature>
<feature type="active site" evidence="1">
    <location>
        <position position="68"/>
    </location>
</feature>
<feature type="binding site" evidence="1">
    <location>
        <position position="67"/>
    </location>
    <ligand>
        <name>Zn(2+)</name>
        <dbReference type="ChEBI" id="CHEBI:29105"/>
    </ligand>
</feature>
<feature type="binding site" evidence="1">
    <location>
        <position position="71"/>
    </location>
    <ligand>
        <name>Zn(2+)</name>
        <dbReference type="ChEBI" id="CHEBI:29105"/>
    </ligand>
</feature>
<name>SPRTL_LISMH</name>
<proteinExistence type="inferred from homology"/>
<evidence type="ECO:0000255" key="1">
    <source>
        <dbReference type="HAMAP-Rule" id="MF_00745"/>
    </source>
</evidence>
<comment type="cofactor">
    <cofactor evidence="1">
        <name>Zn(2+)</name>
        <dbReference type="ChEBI" id="CHEBI:29105"/>
    </cofactor>
    <text evidence="1">Binds 1 zinc ion.</text>
</comment>
<comment type="subcellular location">
    <subcellularLocation>
        <location evidence="1">Cytoplasm</location>
    </subcellularLocation>
</comment>
<comment type="similarity">
    <text evidence="1">Belongs to the SprT family.</text>
</comment>
<gene>
    <name type="ordered locus">LMHCC_1727</name>
</gene>
<reference key="1">
    <citation type="journal article" date="2011" name="J. Bacteriol.">
        <title>Genome sequence of lineage III Listeria monocytogenes strain HCC23.</title>
        <authorList>
            <person name="Steele C.L."/>
            <person name="Donaldson J.R."/>
            <person name="Paul D."/>
            <person name="Banes M.M."/>
            <person name="Arick T."/>
            <person name="Bridges S.M."/>
            <person name="Lawrence M.L."/>
        </authorList>
    </citation>
    <scope>NUCLEOTIDE SEQUENCE [LARGE SCALE GENOMIC DNA]</scope>
    <source>
        <strain>HCC23</strain>
    </source>
</reference>
<protein>
    <recommendedName>
        <fullName evidence="1">Protein SprT-like</fullName>
    </recommendedName>
</protein>
<keyword id="KW-0963">Cytoplasm</keyword>
<keyword id="KW-0479">Metal-binding</keyword>
<keyword id="KW-0862">Zinc</keyword>